<evidence type="ECO:0000255" key="1">
    <source>
        <dbReference type="HAMAP-Rule" id="MF_00828"/>
    </source>
</evidence>
<evidence type="ECO:0000305" key="2"/>
<comment type="subunit">
    <text>The G.violaceus PSI reaction center is composed of one copy each of PsaA,B,C,D,E,F,L,M and Z, and forms trimeric complexes.</text>
</comment>
<comment type="subcellular location">
    <subcellularLocation>
        <location evidence="2">Cell inner membrane</location>
        <topology evidence="2">Single-pass membrane protein</topology>
    </subcellularLocation>
</comment>
<comment type="similarity">
    <text evidence="1">Belongs to the PsaM family.</text>
</comment>
<organism>
    <name type="scientific">Gloeobacter violaceus (strain ATCC 29082 / PCC 7421)</name>
    <dbReference type="NCBI Taxonomy" id="251221"/>
    <lineage>
        <taxon>Bacteria</taxon>
        <taxon>Bacillati</taxon>
        <taxon>Cyanobacteriota</taxon>
        <taxon>Cyanophyceae</taxon>
        <taxon>Gloeobacterales</taxon>
        <taxon>Gloeobacteraceae</taxon>
        <taxon>Gloeobacter</taxon>
    </lineage>
</organism>
<feature type="chain" id="PRO_0000207762" description="Photosystem I reaction center subunit XII">
    <location>
        <begin position="1"/>
        <end position="34"/>
    </location>
</feature>
<feature type="transmembrane region" description="Helical" evidence="1">
    <location>
        <begin position="11"/>
        <end position="31"/>
    </location>
</feature>
<accession>Q7NHY3</accession>
<proteinExistence type="evidence at protein level"/>
<keyword id="KW-0002">3D-structure</keyword>
<keyword id="KW-0997">Cell inner membrane</keyword>
<keyword id="KW-1003">Cell membrane</keyword>
<keyword id="KW-0472">Membrane</keyword>
<keyword id="KW-0602">Photosynthesis</keyword>
<keyword id="KW-0603">Photosystem I</keyword>
<keyword id="KW-1185">Reference proteome</keyword>
<keyword id="KW-0812">Transmembrane</keyword>
<keyword id="KW-1133">Transmembrane helix</keyword>
<sequence>MAATVVSGAQVAIAFVVALIAGIAALLLSTALGK</sequence>
<name>PSAM_GLOVI</name>
<dbReference type="EMBL" id="BA000045">
    <property type="protein sequence ID" value="BAC90342.1"/>
    <property type="molecule type" value="Genomic_DNA"/>
</dbReference>
<dbReference type="RefSeq" id="NP_925347.1">
    <property type="nucleotide sequence ID" value="NC_005125.1"/>
</dbReference>
<dbReference type="RefSeq" id="WP_011142397.1">
    <property type="nucleotide sequence ID" value="NC_005125.1"/>
</dbReference>
<dbReference type="PDB" id="7F4V">
    <property type="method" value="EM"/>
    <property type="resolution" value="2.04 A"/>
    <property type="chains" value="aM/bM/cM=1-34"/>
</dbReference>
<dbReference type="PDBsum" id="7F4V"/>
<dbReference type="EMDB" id="EMD-31455"/>
<dbReference type="SMR" id="Q7NHY3"/>
<dbReference type="STRING" id="251221.gene:10759898"/>
<dbReference type="EnsemblBacteria" id="BAC90342">
    <property type="protein sequence ID" value="BAC90342"/>
    <property type="gene ID" value="BAC90342"/>
</dbReference>
<dbReference type="KEGG" id="gvi:gsl2401"/>
<dbReference type="HOGENOM" id="CLU_215773_2_0_3"/>
<dbReference type="InParanoid" id="Q7NHY3"/>
<dbReference type="Proteomes" id="UP000000557">
    <property type="component" value="Chromosome"/>
</dbReference>
<dbReference type="GO" id="GO:0009522">
    <property type="term" value="C:photosystem I"/>
    <property type="evidence" value="ECO:0007669"/>
    <property type="project" value="UniProtKB-KW"/>
</dbReference>
<dbReference type="GO" id="GO:0005886">
    <property type="term" value="C:plasma membrane"/>
    <property type="evidence" value="ECO:0007669"/>
    <property type="project" value="UniProtKB-SubCell"/>
</dbReference>
<dbReference type="GO" id="GO:0015979">
    <property type="term" value="P:photosynthesis"/>
    <property type="evidence" value="ECO:0007669"/>
    <property type="project" value="UniProtKB-UniRule"/>
</dbReference>
<dbReference type="HAMAP" id="MF_00828">
    <property type="entry name" value="PSI_PsaM"/>
    <property type="match status" value="1"/>
</dbReference>
<dbReference type="InterPro" id="IPR010010">
    <property type="entry name" value="PSI_PsaM"/>
</dbReference>
<dbReference type="NCBIfam" id="TIGR03053">
    <property type="entry name" value="PS_I_psaM"/>
    <property type="match status" value="1"/>
</dbReference>
<dbReference type="Pfam" id="PF07465">
    <property type="entry name" value="PsaM"/>
    <property type="match status" value="1"/>
</dbReference>
<gene>
    <name evidence="1" type="primary">psaM</name>
    <name type="ordered locus">gsl2401</name>
</gene>
<protein>
    <recommendedName>
        <fullName evidence="1">Photosystem I reaction center subunit XII</fullName>
    </recommendedName>
    <alternativeName>
        <fullName evidence="1">PSI-M</fullName>
    </alternativeName>
</protein>
<reference key="1">
    <citation type="journal article" date="2003" name="DNA Res.">
        <title>Complete genome structure of Gloeobacter violaceus PCC 7421, a cyanobacterium that lacks thylakoids.</title>
        <authorList>
            <person name="Nakamura Y."/>
            <person name="Kaneko T."/>
            <person name="Sato S."/>
            <person name="Mimuro M."/>
            <person name="Miyashita H."/>
            <person name="Tsuchiya T."/>
            <person name="Sasamoto S."/>
            <person name="Watanabe A."/>
            <person name="Kawashima K."/>
            <person name="Kishida Y."/>
            <person name="Kiyokawa C."/>
            <person name="Kohara M."/>
            <person name="Matsumoto M."/>
            <person name="Matsuno A."/>
            <person name="Nakazaki N."/>
            <person name="Shimpo S."/>
            <person name="Takeuchi C."/>
            <person name="Yamada M."/>
            <person name="Tabata S."/>
        </authorList>
    </citation>
    <scope>NUCLEOTIDE SEQUENCE [LARGE SCALE GENOMIC DNA]</scope>
    <source>
        <strain>ATCC 29082 / PCC 7421</strain>
    </source>
</reference>
<reference key="2">
    <citation type="journal article" date="2004" name="FEBS Lett.">
        <title>Unique constitution of photosystem I with a novel subunit in the cyanobacterium Gloeobacter violaceus PCC 7421.</title>
        <authorList>
            <person name="Inoue H."/>
            <person name="Tsuchiya T."/>
            <person name="Satoh S."/>
            <person name="Miyashita H."/>
            <person name="Kaneko T."/>
            <person name="Tabata S."/>
            <person name="Tanaka A."/>
            <person name="Mimuro M."/>
        </authorList>
    </citation>
    <scope>IDENTIFICATION BY MASS SPECTROMETRY</scope>
    <scope>CHARACTERIZATION OF PHOTOSYSTEM I</scope>
    <source>
        <strain>ATCC 29082 / PCC 7421</strain>
    </source>
</reference>